<reference key="1">
    <citation type="journal article" date="2005" name="Genome Biol.">
        <title>Full-length cDNAs from chicken bursal lymphocytes to facilitate gene function analysis.</title>
        <authorList>
            <person name="Caldwell R.B."/>
            <person name="Kierzek A.M."/>
            <person name="Arakawa H."/>
            <person name="Bezzubov Y."/>
            <person name="Zaim J."/>
            <person name="Fiedler P."/>
            <person name="Kutter S."/>
            <person name="Blagodatski A."/>
            <person name="Kostovska D."/>
            <person name="Koter M."/>
            <person name="Plachy J."/>
            <person name="Carninci P."/>
            <person name="Hayashizaki Y."/>
            <person name="Buerstedde J.-M."/>
        </authorList>
    </citation>
    <scope>NUCLEOTIDE SEQUENCE [LARGE SCALE MRNA]</scope>
    <source>
        <strain>CB</strain>
        <tissue>Bursa of Fabricius</tissue>
    </source>
</reference>
<organism>
    <name type="scientific">Gallus gallus</name>
    <name type="common">Chicken</name>
    <dbReference type="NCBI Taxonomy" id="9031"/>
    <lineage>
        <taxon>Eukaryota</taxon>
        <taxon>Metazoa</taxon>
        <taxon>Chordata</taxon>
        <taxon>Craniata</taxon>
        <taxon>Vertebrata</taxon>
        <taxon>Euteleostomi</taxon>
        <taxon>Archelosauria</taxon>
        <taxon>Archosauria</taxon>
        <taxon>Dinosauria</taxon>
        <taxon>Saurischia</taxon>
        <taxon>Theropoda</taxon>
        <taxon>Coelurosauria</taxon>
        <taxon>Aves</taxon>
        <taxon>Neognathae</taxon>
        <taxon>Galloanserae</taxon>
        <taxon>Galliformes</taxon>
        <taxon>Phasianidae</taxon>
        <taxon>Phasianinae</taxon>
        <taxon>Gallus</taxon>
    </lineage>
</organism>
<accession>Q5ZJ40</accession>
<name>RCOR3_CHICK</name>
<comment type="function">
    <text evidence="5">May act as a component of a corepressor complex that represses transcription.</text>
</comment>
<comment type="subcellular location">
    <subcellularLocation>
        <location evidence="2 3">Nucleus</location>
    </subcellularLocation>
</comment>
<comment type="similarity">
    <text evidence="5">Belongs to the CoREST family.</text>
</comment>
<feature type="chain" id="PRO_0000226783" description="REST corepressor 3">
    <location>
        <begin position="1"/>
        <end position="378"/>
    </location>
</feature>
<feature type="domain" description="ELM2" evidence="2">
    <location>
        <begin position="1"/>
        <end position="83"/>
    </location>
</feature>
<feature type="domain" description="SANT" evidence="3">
    <location>
        <begin position="84"/>
        <end position="135"/>
    </location>
</feature>
<feature type="region of interest" description="Disordered" evidence="4">
    <location>
        <begin position="147"/>
        <end position="219"/>
    </location>
</feature>
<feature type="region of interest" description="Disordered" evidence="4">
    <location>
        <begin position="337"/>
        <end position="356"/>
    </location>
</feature>
<feature type="coiled-coil region" evidence="1">
    <location>
        <begin position="238"/>
        <end position="273"/>
    </location>
</feature>
<feature type="compositionally biased region" description="Basic and acidic residues" evidence="4">
    <location>
        <begin position="162"/>
        <end position="184"/>
    </location>
</feature>
<feature type="compositionally biased region" description="Basic residues" evidence="4">
    <location>
        <begin position="205"/>
        <end position="217"/>
    </location>
</feature>
<keyword id="KW-0175">Coiled coil</keyword>
<keyword id="KW-0539">Nucleus</keyword>
<keyword id="KW-1185">Reference proteome</keyword>
<keyword id="KW-0678">Repressor</keyword>
<keyword id="KW-0804">Transcription</keyword>
<keyword id="KW-0805">Transcription regulation</keyword>
<gene>
    <name type="primary">RCOR3</name>
    <name type="ORF">RCJMB04_20o23</name>
</gene>
<evidence type="ECO:0000255" key="1"/>
<evidence type="ECO:0000255" key="2">
    <source>
        <dbReference type="PROSITE-ProRule" id="PRU00512"/>
    </source>
</evidence>
<evidence type="ECO:0000255" key="3">
    <source>
        <dbReference type="PROSITE-ProRule" id="PRU00624"/>
    </source>
</evidence>
<evidence type="ECO:0000256" key="4">
    <source>
        <dbReference type="SAM" id="MobiDB-lite"/>
    </source>
</evidence>
<evidence type="ECO:0000305" key="5"/>
<proteinExistence type="evidence at transcript level"/>
<protein>
    <recommendedName>
        <fullName>REST corepressor 3</fullName>
    </recommendedName>
</protein>
<dbReference type="EMBL" id="AJ720594">
    <property type="protein sequence ID" value="CAG32253.1"/>
    <property type="molecule type" value="mRNA"/>
</dbReference>
<dbReference type="RefSeq" id="NP_001073195.1">
    <property type="nucleotide sequence ID" value="NM_001079727.1"/>
</dbReference>
<dbReference type="SMR" id="Q5ZJ40"/>
<dbReference type="FunCoup" id="Q5ZJ40">
    <property type="interactions" value="2039"/>
</dbReference>
<dbReference type="STRING" id="9031.ENSGALP00000070293"/>
<dbReference type="PaxDb" id="9031-ENSGALP00000016032"/>
<dbReference type="GeneID" id="421380"/>
<dbReference type="KEGG" id="gga:421380"/>
<dbReference type="CTD" id="55758"/>
<dbReference type="VEuPathDB" id="HostDB:geneid_421380"/>
<dbReference type="eggNOG" id="KOG1194">
    <property type="taxonomic scope" value="Eukaryota"/>
</dbReference>
<dbReference type="InParanoid" id="Q5ZJ40"/>
<dbReference type="OrthoDB" id="10064338at2759"/>
<dbReference type="PhylomeDB" id="Q5ZJ40"/>
<dbReference type="PRO" id="PR:Q5ZJ40"/>
<dbReference type="Proteomes" id="UP000000539">
    <property type="component" value="Unassembled WGS sequence"/>
</dbReference>
<dbReference type="GO" id="GO:0000118">
    <property type="term" value="C:histone deacetylase complex"/>
    <property type="evidence" value="ECO:0000318"/>
    <property type="project" value="GO_Central"/>
</dbReference>
<dbReference type="GO" id="GO:0005667">
    <property type="term" value="C:transcription regulator complex"/>
    <property type="evidence" value="ECO:0000318"/>
    <property type="project" value="GO_Central"/>
</dbReference>
<dbReference type="GO" id="GO:0003714">
    <property type="term" value="F:transcription corepressor activity"/>
    <property type="evidence" value="ECO:0000318"/>
    <property type="project" value="GO_Central"/>
</dbReference>
<dbReference type="GO" id="GO:0045892">
    <property type="term" value="P:negative regulation of DNA-templated transcription"/>
    <property type="evidence" value="ECO:0000318"/>
    <property type="project" value="GO_Central"/>
</dbReference>
<dbReference type="GO" id="GO:0006357">
    <property type="term" value="P:regulation of transcription by RNA polymerase II"/>
    <property type="evidence" value="ECO:0000318"/>
    <property type="project" value="GO_Central"/>
</dbReference>
<dbReference type="FunFam" id="1.10.10.60:FF:000033">
    <property type="entry name" value="REST corepressor 3"/>
    <property type="match status" value="1"/>
</dbReference>
<dbReference type="FunFam" id="1.20.58.1880:FF:000005">
    <property type="entry name" value="REST corepressor 3 isoform X3"/>
    <property type="match status" value="1"/>
</dbReference>
<dbReference type="FunFam" id="4.10.1240.50:FF:000002">
    <property type="entry name" value="REST corepressor isoform X1"/>
    <property type="match status" value="1"/>
</dbReference>
<dbReference type="Gene3D" id="1.20.58.1880">
    <property type="match status" value="1"/>
</dbReference>
<dbReference type="Gene3D" id="4.10.1240.50">
    <property type="match status" value="1"/>
</dbReference>
<dbReference type="Gene3D" id="1.10.10.60">
    <property type="entry name" value="Homeodomain-like"/>
    <property type="match status" value="1"/>
</dbReference>
<dbReference type="InterPro" id="IPR000949">
    <property type="entry name" value="ELM2_dom"/>
</dbReference>
<dbReference type="InterPro" id="IPR009057">
    <property type="entry name" value="Homeodomain-like_sf"/>
</dbReference>
<dbReference type="InterPro" id="IPR049048">
    <property type="entry name" value="REST_helical"/>
</dbReference>
<dbReference type="InterPro" id="IPR001005">
    <property type="entry name" value="SANT/Myb"/>
</dbReference>
<dbReference type="InterPro" id="IPR017884">
    <property type="entry name" value="SANT_dom"/>
</dbReference>
<dbReference type="InterPro" id="IPR051066">
    <property type="entry name" value="Trans_reg/Corepressor"/>
</dbReference>
<dbReference type="PANTHER" id="PTHR16089:SF13">
    <property type="entry name" value="REST COREPRESSOR 3"/>
    <property type="match status" value="1"/>
</dbReference>
<dbReference type="PANTHER" id="PTHR16089">
    <property type="entry name" value="REST COREPRESSOR COREST PROTEIN-RELATED"/>
    <property type="match status" value="1"/>
</dbReference>
<dbReference type="Pfam" id="PF01448">
    <property type="entry name" value="ELM2"/>
    <property type="match status" value="1"/>
</dbReference>
<dbReference type="Pfam" id="PF00249">
    <property type="entry name" value="Myb_DNA-binding"/>
    <property type="match status" value="1"/>
</dbReference>
<dbReference type="Pfam" id="PF20878">
    <property type="entry name" value="REST_helical"/>
    <property type="match status" value="1"/>
</dbReference>
<dbReference type="SMART" id="SM01189">
    <property type="entry name" value="ELM2"/>
    <property type="match status" value="1"/>
</dbReference>
<dbReference type="SMART" id="SM00717">
    <property type="entry name" value="SANT"/>
    <property type="match status" value="1"/>
</dbReference>
<dbReference type="SUPFAM" id="SSF46689">
    <property type="entry name" value="Homeodomain-like"/>
    <property type="match status" value="1"/>
</dbReference>
<dbReference type="PROSITE" id="PS51156">
    <property type="entry name" value="ELM2"/>
    <property type="match status" value="1"/>
</dbReference>
<dbReference type="PROSITE" id="PS51293">
    <property type="entry name" value="SANT"/>
    <property type="match status" value="1"/>
</dbReference>
<sequence length="378" mass="42409">MRVGAEYQARIPDFEPGATKYTDKDNGGMLVWSPYHNIPDAKLDEYIAIAKEKHGYNVEQALGMLFWHKHNIEKSLADLPNFTPFPDEWTVEDKVLFEQAFSFHGKSFHRIQQMLPDKTIASLVKYYYSWKKTRSRTSLMDRQARKLANRNNQGDSDDDVEEPHPMDGNDSDYDPKKEAKKEGNNEQPVQTSKIGLGRREYQSLQHRHHSQRSKCRPPKGMYLTQEDVIAVSCSPNAANTILRRLDMELISLKRQVQNAKQVNSALKQKMEGGIEEFKPPESNQKINARWTTEEQLLAVQGAKHSDHSVFRPFTSSTGICSSSHRSHSNFKSATPVTASSTSCCSCSPPSASAAPTTGAIYSAKANPKSASPTAHPPS</sequence>